<evidence type="ECO:0000255" key="1">
    <source>
        <dbReference type="HAMAP-Rule" id="MF_01334"/>
    </source>
</evidence>
<evidence type="ECO:0000305" key="2"/>
<sequence>MQTIVLEAERRMPGKKSDLKQLRANGNVPATLYHKGEPSISLSVKEQSLRKVIYTTESHIINLRFTDGTEKPSVMKDYQFNPLTDSITHADFQLLKSDEYVEVEVPILFTGNPVGVVKGGMVQATLHKLEIRCLPSDMPEHITVDISSMDMGESLHVGELSSKIQEKIEFTVLTDSHAPVISVLAPRVVADAAPVAPEA</sequence>
<keyword id="KW-1185">Reference proteome</keyword>
<keyword id="KW-0687">Ribonucleoprotein</keyword>
<keyword id="KW-0689">Ribosomal protein</keyword>
<keyword id="KW-0694">RNA-binding</keyword>
<keyword id="KW-0699">rRNA-binding</keyword>
<name>RL25_CHLT3</name>
<accession>B3QWH6</accession>
<gene>
    <name evidence="1" type="primary">rplY</name>
    <name evidence="1" type="synonym">ctc</name>
    <name type="ordered locus">Ctha_2285</name>
</gene>
<protein>
    <recommendedName>
        <fullName evidence="1">Large ribosomal subunit protein bL25</fullName>
    </recommendedName>
    <alternativeName>
        <fullName evidence="2">50S ribosomal protein L25</fullName>
    </alternativeName>
    <alternativeName>
        <fullName evidence="1">General stress protein CTC</fullName>
    </alternativeName>
</protein>
<comment type="function">
    <text evidence="1">This is one of the proteins that binds to the 5S RNA in the ribosome where it forms part of the central protuberance.</text>
</comment>
<comment type="subunit">
    <text evidence="1">Part of the 50S ribosomal subunit; part of the 5S rRNA/L5/L18/L25 subcomplex. Contacts the 5S rRNA. Binds to the 5S rRNA independently of L5 and L18.</text>
</comment>
<comment type="similarity">
    <text evidence="1">Belongs to the bacterial ribosomal protein bL25 family. CTC subfamily.</text>
</comment>
<feature type="chain" id="PRO_1000142505" description="Large ribosomal subunit protein bL25">
    <location>
        <begin position="1"/>
        <end position="199"/>
    </location>
</feature>
<dbReference type="EMBL" id="CP001100">
    <property type="protein sequence ID" value="ACF14736.1"/>
    <property type="molecule type" value="Genomic_DNA"/>
</dbReference>
<dbReference type="RefSeq" id="WP_012500819.1">
    <property type="nucleotide sequence ID" value="NC_011026.1"/>
</dbReference>
<dbReference type="SMR" id="B3QWH6"/>
<dbReference type="STRING" id="517418.Ctha_2285"/>
<dbReference type="KEGG" id="cts:Ctha_2285"/>
<dbReference type="eggNOG" id="COG1825">
    <property type="taxonomic scope" value="Bacteria"/>
</dbReference>
<dbReference type="HOGENOM" id="CLU_075939_2_1_10"/>
<dbReference type="OrthoDB" id="9786489at2"/>
<dbReference type="Proteomes" id="UP000001208">
    <property type="component" value="Chromosome"/>
</dbReference>
<dbReference type="GO" id="GO:0022625">
    <property type="term" value="C:cytosolic large ribosomal subunit"/>
    <property type="evidence" value="ECO:0007669"/>
    <property type="project" value="TreeGrafter"/>
</dbReference>
<dbReference type="GO" id="GO:0008097">
    <property type="term" value="F:5S rRNA binding"/>
    <property type="evidence" value="ECO:0007669"/>
    <property type="project" value="InterPro"/>
</dbReference>
<dbReference type="GO" id="GO:0003735">
    <property type="term" value="F:structural constituent of ribosome"/>
    <property type="evidence" value="ECO:0007669"/>
    <property type="project" value="InterPro"/>
</dbReference>
<dbReference type="GO" id="GO:0006412">
    <property type="term" value="P:translation"/>
    <property type="evidence" value="ECO:0007669"/>
    <property type="project" value="UniProtKB-UniRule"/>
</dbReference>
<dbReference type="CDD" id="cd00495">
    <property type="entry name" value="Ribosomal_L25_TL5_CTC"/>
    <property type="match status" value="1"/>
</dbReference>
<dbReference type="Gene3D" id="2.170.120.20">
    <property type="entry name" value="Ribosomal protein L25, beta domain"/>
    <property type="match status" value="1"/>
</dbReference>
<dbReference type="Gene3D" id="2.40.240.10">
    <property type="entry name" value="Ribosomal Protein L25, Chain P"/>
    <property type="match status" value="1"/>
</dbReference>
<dbReference type="HAMAP" id="MF_01334">
    <property type="entry name" value="Ribosomal_bL25_CTC"/>
    <property type="match status" value="1"/>
</dbReference>
<dbReference type="InterPro" id="IPR020056">
    <property type="entry name" value="Rbsml_bL25/Gln-tRNA_synth_N"/>
</dbReference>
<dbReference type="InterPro" id="IPR011035">
    <property type="entry name" value="Ribosomal_bL25/Gln-tRNA_synth"/>
</dbReference>
<dbReference type="InterPro" id="IPR020057">
    <property type="entry name" value="Ribosomal_bL25_b-dom"/>
</dbReference>
<dbReference type="InterPro" id="IPR037121">
    <property type="entry name" value="Ribosomal_bL25_C"/>
</dbReference>
<dbReference type="InterPro" id="IPR001021">
    <property type="entry name" value="Ribosomal_bL25_long"/>
</dbReference>
<dbReference type="InterPro" id="IPR029751">
    <property type="entry name" value="Ribosomal_L25_dom"/>
</dbReference>
<dbReference type="InterPro" id="IPR020930">
    <property type="entry name" value="Ribosomal_uL5_bac-type"/>
</dbReference>
<dbReference type="NCBIfam" id="TIGR00731">
    <property type="entry name" value="bL25_bact_ctc"/>
    <property type="match status" value="1"/>
</dbReference>
<dbReference type="NCBIfam" id="NF004136">
    <property type="entry name" value="PRK05618.3-2"/>
    <property type="match status" value="1"/>
</dbReference>
<dbReference type="PANTHER" id="PTHR33284">
    <property type="entry name" value="RIBOSOMAL PROTEIN L25/GLN-TRNA SYNTHETASE, ANTI-CODON-BINDING DOMAIN-CONTAINING PROTEIN"/>
    <property type="match status" value="1"/>
</dbReference>
<dbReference type="PANTHER" id="PTHR33284:SF1">
    <property type="entry name" value="RIBOSOMAL PROTEIN L25_GLN-TRNA SYNTHETASE, ANTI-CODON-BINDING DOMAIN-CONTAINING PROTEIN"/>
    <property type="match status" value="1"/>
</dbReference>
<dbReference type="Pfam" id="PF01386">
    <property type="entry name" value="Ribosomal_L25p"/>
    <property type="match status" value="1"/>
</dbReference>
<dbReference type="Pfam" id="PF14693">
    <property type="entry name" value="Ribosomal_TL5_C"/>
    <property type="match status" value="1"/>
</dbReference>
<dbReference type="SUPFAM" id="SSF50715">
    <property type="entry name" value="Ribosomal protein L25-like"/>
    <property type="match status" value="1"/>
</dbReference>
<reference key="1">
    <citation type="submission" date="2008-06" db="EMBL/GenBank/DDBJ databases">
        <title>Complete sequence of Chloroherpeton thalassium ATCC 35110.</title>
        <authorList>
            <consortium name="US DOE Joint Genome Institute"/>
            <person name="Lucas S."/>
            <person name="Copeland A."/>
            <person name="Lapidus A."/>
            <person name="Glavina del Rio T."/>
            <person name="Dalin E."/>
            <person name="Tice H."/>
            <person name="Bruce D."/>
            <person name="Goodwin L."/>
            <person name="Pitluck S."/>
            <person name="Schmutz J."/>
            <person name="Larimer F."/>
            <person name="Land M."/>
            <person name="Hauser L."/>
            <person name="Kyrpides N."/>
            <person name="Mikhailova N."/>
            <person name="Liu Z."/>
            <person name="Li T."/>
            <person name="Zhao F."/>
            <person name="Overmann J."/>
            <person name="Bryant D.A."/>
            <person name="Richardson P."/>
        </authorList>
    </citation>
    <scope>NUCLEOTIDE SEQUENCE [LARGE SCALE GENOMIC DNA]</scope>
    <source>
        <strain>ATCC 35110 / GB-78</strain>
    </source>
</reference>
<proteinExistence type="inferred from homology"/>
<organism>
    <name type="scientific">Chloroherpeton thalassium (strain ATCC 35110 / GB-78)</name>
    <dbReference type="NCBI Taxonomy" id="517418"/>
    <lineage>
        <taxon>Bacteria</taxon>
        <taxon>Pseudomonadati</taxon>
        <taxon>Chlorobiota</taxon>
        <taxon>Chlorobiia</taxon>
        <taxon>Chlorobiales</taxon>
        <taxon>Chloroherpetonaceae</taxon>
        <taxon>Chloroherpeton</taxon>
    </lineage>
</organism>